<sequence length="72" mass="8285">MAKEDCIEMQGTILETLPNTMFRVELENGHVVTAHISGKMRKNYIRILTGDKVTVEMTPYDLSKGRIIFRSR</sequence>
<proteinExistence type="inferred from homology"/>
<name>IF1_HAEI8</name>
<feature type="chain" id="PRO_0000263807" description="Translation initiation factor IF-1">
    <location>
        <begin position="1"/>
        <end position="72"/>
    </location>
</feature>
<feature type="domain" description="S1-like" evidence="1">
    <location>
        <begin position="1"/>
        <end position="72"/>
    </location>
</feature>
<comment type="function">
    <text evidence="1">One of the essential components for the initiation of protein synthesis. Stabilizes the binding of IF-2 and IF-3 on the 30S subunit to which N-formylmethionyl-tRNA(fMet) subsequently binds. Helps modulate mRNA selection, yielding the 30S pre-initiation complex (PIC). Upon addition of the 50S ribosomal subunit IF-1, IF-2 and IF-3 are released leaving the mature 70S translation initiation complex.</text>
</comment>
<comment type="subunit">
    <text evidence="1">Component of the 30S ribosomal translation pre-initiation complex which assembles on the 30S ribosome in the order IF-2 and IF-3, IF-1 and N-formylmethionyl-tRNA(fMet); mRNA recruitment can occur at any time during PIC assembly.</text>
</comment>
<comment type="subcellular location">
    <subcellularLocation>
        <location evidence="1">Cytoplasm</location>
    </subcellularLocation>
</comment>
<comment type="similarity">
    <text evidence="1">Belongs to the IF-1 family.</text>
</comment>
<comment type="sequence caution" evidence="2">
    <conflict type="erroneous initiation">
        <sequence resource="EMBL-CDS" id="AAX87597"/>
    </conflict>
    <text>Extended N-terminus.</text>
</comment>
<protein>
    <recommendedName>
        <fullName evidence="1">Translation initiation factor IF-1</fullName>
    </recommendedName>
</protein>
<gene>
    <name evidence="1" type="primary">infA</name>
    <name type="ordered locus">NTHI0674</name>
</gene>
<dbReference type="EMBL" id="CP000057">
    <property type="protein sequence ID" value="AAX87597.1"/>
    <property type="status" value="ALT_INIT"/>
    <property type="molecule type" value="Genomic_DNA"/>
</dbReference>
<dbReference type="RefSeq" id="WP_005627617.1">
    <property type="nucleotide sequence ID" value="NC_007146.2"/>
</dbReference>
<dbReference type="SMR" id="Q4QN00"/>
<dbReference type="GeneID" id="93298322"/>
<dbReference type="KEGG" id="hit:NTHI0674"/>
<dbReference type="HOGENOM" id="CLU_151267_1_0_6"/>
<dbReference type="Proteomes" id="UP000002525">
    <property type="component" value="Chromosome"/>
</dbReference>
<dbReference type="GO" id="GO:0005829">
    <property type="term" value="C:cytosol"/>
    <property type="evidence" value="ECO:0007669"/>
    <property type="project" value="TreeGrafter"/>
</dbReference>
<dbReference type="GO" id="GO:0043022">
    <property type="term" value="F:ribosome binding"/>
    <property type="evidence" value="ECO:0007669"/>
    <property type="project" value="UniProtKB-UniRule"/>
</dbReference>
<dbReference type="GO" id="GO:0019843">
    <property type="term" value="F:rRNA binding"/>
    <property type="evidence" value="ECO:0007669"/>
    <property type="project" value="UniProtKB-UniRule"/>
</dbReference>
<dbReference type="GO" id="GO:0003743">
    <property type="term" value="F:translation initiation factor activity"/>
    <property type="evidence" value="ECO:0007669"/>
    <property type="project" value="UniProtKB-UniRule"/>
</dbReference>
<dbReference type="CDD" id="cd04451">
    <property type="entry name" value="S1_IF1"/>
    <property type="match status" value="1"/>
</dbReference>
<dbReference type="FunFam" id="2.40.50.140:FF:000002">
    <property type="entry name" value="Translation initiation factor IF-1"/>
    <property type="match status" value="1"/>
</dbReference>
<dbReference type="Gene3D" id="2.40.50.140">
    <property type="entry name" value="Nucleic acid-binding proteins"/>
    <property type="match status" value="1"/>
</dbReference>
<dbReference type="HAMAP" id="MF_00075">
    <property type="entry name" value="IF_1"/>
    <property type="match status" value="1"/>
</dbReference>
<dbReference type="InterPro" id="IPR012340">
    <property type="entry name" value="NA-bd_OB-fold"/>
</dbReference>
<dbReference type="InterPro" id="IPR006196">
    <property type="entry name" value="RNA-binding_domain_S1_IF1"/>
</dbReference>
<dbReference type="InterPro" id="IPR003029">
    <property type="entry name" value="S1_domain"/>
</dbReference>
<dbReference type="InterPro" id="IPR004368">
    <property type="entry name" value="TIF_IF1"/>
</dbReference>
<dbReference type="NCBIfam" id="TIGR00008">
    <property type="entry name" value="infA"/>
    <property type="match status" value="1"/>
</dbReference>
<dbReference type="PANTHER" id="PTHR33370">
    <property type="entry name" value="TRANSLATION INITIATION FACTOR IF-1, CHLOROPLASTIC"/>
    <property type="match status" value="1"/>
</dbReference>
<dbReference type="PANTHER" id="PTHR33370:SF1">
    <property type="entry name" value="TRANSLATION INITIATION FACTOR IF-1, CHLOROPLASTIC"/>
    <property type="match status" value="1"/>
</dbReference>
<dbReference type="Pfam" id="PF01176">
    <property type="entry name" value="eIF-1a"/>
    <property type="match status" value="1"/>
</dbReference>
<dbReference type="SMART" id="SM00316">
    <property type="entry name" value="S1"/>
    <property type="match status" value="1"/>
</dbReference>
<dbReference type="SUPFAM" id="SSF50249">
    <property type="entry name" value="Nucleic acid-binding proteins"/>
    <property type="match status" value="1"/>
</dbReference>
<dbReference type="PROSITE" id="PS50832">
    <property type="entry name" value="S1_IF1_TYPE"/>
    <property type="match status" value="1"/>
</dbReference>
<evidence type="ECO:0000255" key="1">
    <source>
        <dbReference type="HAMAP-Rule" id="MF_00075"/>
    </source>
</evidence>
<evidence type="ECO:0000305" key="2"/>
<accession>Q4QN00</accession>
<organism>
    <name type="scientific">Haemophilus influenzae (strain 86-028NP)</name>
    <dbReference type="NCBI Taxonomy" id="281310"/>
    <lineage>
        <taxon>Bacteria</taxon>
        <taxon>Pseudomonadati</taxon>
        <taxon>Pseudomonadota</taxon>
        <taxon>Gammaproteobacteria</taxon>
        <taxon>Pasteurellales</taxon>
        <taxon>Pasteurellaceae</taxon>
        <taxon>Haemophilus</taxon>
    </lineage>
</organism>
<keyword id="KW-0963">Cytoplasm</keyword>
<keyword id="KW-0396">Initiation factor</keyword>
<keyword id="KW-0648">Protein biosynthesis</keyword>
<keyword id="KW-0694">RNA-binding</keyword>
<keyword id="KW-0699">rRNA-binding</keyword>
<reference key="1">
    <citation type="journal article" date="2005" name="J. Bacteriol.">
        <title>Genomic sequence of an otitis media isolate of nontypeable Haemophilus influenzae: comparative study with H. influenzae serotype d, strain KW20.</title>
        <authorList>
            <person name="Harrison A."/>
            <person name="Dyer D.W."/>
            <person name="Gillaspy A."/>
            <person name="Ray W.C."/>
            <person name="Mungur R."/>
            <person name="Carson M.B."/>
            <person name="Zhong H."/>
            <person name="Gipson J."/>
            <person name="Gipson M."/>
            <person name="Johnson L.S."/>
            <person name="Lewis L."/>
            <person name="Bakaletz L.O."/>
            <person name="Munson R.S. Jr."/>
        </authorList>
    </citation>
    <scope>NUCLEOTIDE SEQUENCE [LARGE SCALE GENOMIC DNA]</scope>
    <source>
        <strain>86-028NP</strain>
    </source>
</reference>